<name>SPC25_ASPOR</name>
<proteinExistence type="inferred from homology"/>
<accession>Q2UPH5</accession>
<reference key="1">
    <citation type="journal article" date="2005" name="Nature">
        <title>Genome sequencing and analysis of Aspergillus oryzae.</title>
        <authorList>
            <person name="Machida M."/>
            <person name="Asai K."/>
            <person name="Sano M."/>
            <person name="Tanaka T."/>
            <person name="Kumagai T."/>
            <person name="Terai G."/>
            <person name="Kusumoto K."/>
            <person name="Arima T."/>
            <person name="Akita O."/>
            <person name="Kashiwagi Y."/>
            <person name="Abe K."/>
            <person name="Gomi K."/>
            <person name="Horiuchi H."/>
            <person name="Kitamoto K."/>
            <person name="Kobayashi T."/>
            <person name="Takeuchi M."/>
            <person name="Denning D.W."/>
            <person name="Galagan J.E."/>
            <person name="Nierman W.C."/>
            <person name="Yu J."/>
            <person name="Archer D.B."/>
            <person name="Bennett J.W."/>
            <person name="Bhatnagar D."/>
            <person name="Cleveland T.E."/>
            <person name="Fedorova N.D."/>
            <person name="Gotoh O."/>
            <person name="Horikawa H."/>
            <person name="Hosoyama A."/>
            <person name="Ichinomiya M."/>
            <person name="Igarashi R."/>
            <person name="Iwashita K."/>
            <person name="Juvvadi P.R."/>
            <person name="Kato M."/>
            <person name="Kato Y."/>
            <person name="Kin T."/>
            <person name="Kokubun A."/>
            <person name="Maeda H."/>
            <person name="Maeyama N."/>
            <person name="Maruyama J."/>
            <person name="Nagasaki H."/>
            <person name="Nakajima T."/>
            <person name="Oda K."/>
            <person name="Okada K."/>
            <person name="Paulsen I."/>
            <person name="Sakamoto K."/>
            <person name="Sawano T."/>
            <person name="Takahashi M."/>
            <person name="Takase K."/>
            <person name="Terabayashi Y."/>
            <person name="Wortman J.R."/>
            <person name="Yamada O."/>
            <person name="Yamagata Y."/>
            <person name="Anazawa H."/>
            <person name="Hata Y."/>
            <person name="Koide Y."/>
            <person name="Komori T."/>
            <person name="Koyama Y."/>
            <person name="Minetoki T."/>
            <person name="Suharnan S."/>
            <person name="Tanaka A."/>
            <person name="Isono K."/>
            <person name="Kuhara S."/>
            <person name="Ogasawara N."/>
            <person name="Kikuchi H."/>
        </authorList>
    </citation>
    <scope>NUCLEOTIDE SEQUENCE [LARGE SCALE GENOMIC DNA]</scope>
    <source>
        <strain>ATCC 42149 / RIB 40</strain>
    </source>
</reference>
<sequence>MASSFEPSLSTSGMRPPLTSADAPSMADSLPSINFGFEDLRNRMAQFTARFDAFIEKGRKQILEERNQFKIGLAELQEDQRMKQRDIEILNLKSQTHDQTIQKEAAEAAEMHGTIASVTMERDSRLAKRDRLKQQINETQKAINQKLEAQKAHARHLDAQARLNIPELEFWQDYLCLRIEGAGREDRLKFIFSHLLEKDWEAEAWFELGTSSRDYDVFHTRPKVDRDALNGELDILNEDRDFGAFLKRMRRLLVEKMQQKRPTI</sequence>
<comment type="function">
    <text evidence="1">Acts as a component of the essential kinetochore-associated NDC80 complex, which is required for chromosome segregation and spindle checkpoint activity.</text>
</comment>
<comment type="subunit">
    <text evidence="1">Component of the NDC80 complex, which consists of ndc80, nuf2, spc24 and spc25.</text>
</comment>
<comment type="subcellular location">
    <subcellularLocation>
        <location evidence="2">Nucleus</location>
    </subcellularLocation>
    <subcellularLocation>
        <location evidence="2">Chromosome</location>
        <location evidence="2">Centromere</location>
        <location evidence="2">Kinetochore</location>
    </subcellularLocation>
    <text evidence="2">Associated with kinetochores.</text>
</comment>
<comment type="similarity">
    <text evidence="5">Belongs to the SPC25 family.</text>
</comment>
<gene>
    <name type="primary">spc25</name>
    <name type="ORF">AO090005001640</name>
</gene>
<dbReference type="EMBL" id="BA000049">
    <property type="protein sequence ID" value="BAE56540.1"/>
    <property type="molecule type" value="Genomic_DNA"/>
</dbReference>
<dbReference type="RefSeq" id="XP_001818542.1">
    <property type="nucleotide sequence ID" value="XM_001818490.1"/>
</dbReference>
<dbReference type="SMR" id="Q2UPH5"/>
<dbReference type="STRING" id="510516.Q2UPH5"/>
<dbReference type="EnsemblFungi" id="BAE56540">
    <property type="protein sequence ID" value="BAE56540"/>
    <property type="gene ID" value="AO090005001640"/>
</dbReference>
<dbReference type="GeneID" id="5990487"/>
<dbReference type="KEGG" id="aor:AO090005001640"/>
<dbReference type="VEuPathDB" id="FungiDB:AO090005001640"/>
<dbReference type="HOGENOM" id="CLU_065188_0_0_1"/>
<dbReference type="OMA" id="HEDQRMK"/>
<dbReference type="OrthoDB" id="78753at5052"/>
<dbReference type="Proteomes" id="UP000006564">
    <property type="component" value="Chromosome 1"/>
</dbReference>
<dbReference type="GO" id="GO:0031262">
    <property type="term" value="C:Ndc80 complex"/>
    <property type="evidence" value="ECO:0000250"/>
    <property type="project" value="UniProtKB"/>
</dbReference>
<dbReference type="GO" id="GO:0005634">
    <property type="term" value="C:nucleus"/>
    <property type="evidence" value="ECO:0007669"/>
    <property type="project" value="UniProtKB-SubCell"/>
</dbReference>
<dbReference type="GO" id="GO:0051301">
    <property type="term" value="P:cell division"/>
    <property type="evidence" value="ECO:0007669"/>
    <property type="project" value="UniProtKB-KW"/>
</dbReference>
<dbReference type="GO" id="GO:0007059">
    <property type="term" value="P:chromosome segregation"/>
    <property type="evidence" value="ECO:0007669"/>
    <property type="project" value="InterPro"/>
</dbReference>
<dbReference type="CDD" id="cd23784">
    <property type="entry name" value="RWD_Spc25"/>
    <property type="match status" value="1"/>
</dbReference>
<dbReference type="FunFam" id="3.30.457.50:FF:000001">
    <property type="entry name" value="Probable kinetochore protein spc25"/>
    <property type="match status" value="1"/>
</dbReference>
<dbReference type="Gene3D" id="3.30.457.50">
    <property type="entry name" value="Chromosome segregation protein Spc25"/>
    <property type="match status" value="1"/>
</dbReference>
<dbReference type="InterPro" id="IPR045143">
    <property type="entry name" value="Spc25"/>
</dbReference>
<dbReference type="InterPro" id="IPR013255">
    <property type="entry name" value="Spc25_C"/>
</dbReference>
<dbReference type="PANTHER" id="PTHR14281:SF0">
    <property type="entry name" value="KINETOCHORE PROTEIN SPC25"/>
    <property type="match status" value="1"/>
</dbReference>
<dbReference type="PANTHER" id="PTHR14281">
    <property type="entry name" value="KINETOCHORE PROTEIN SPC25-RELATED"/>
    <property type="match status" value="1"/>
</dbReference>
<dbReference type="Pfam" id="PF08234">
    <property type="entry name" value="Spindle_Spc25"/>
    <property type="match status" value="1"/>
</dbReference>
<feature type="chain" id="PRO_0000246670" description="Probable kinetochore protein spc25">
    <location>
        <begin position="1"/>
        <end position="264"/>
    </location>
</feature>
<feature type="region of interest" description="Disordered" evidence="4">
    <location>
        <begin position="1"/>
        <end position="25"/>
    </location>
</feature>
<feature type="coiled-coil region" evidence="3">
    <location>
        <begin position="59"/>
        <end position="152"/>
    </location>
</feature>
<feature type="compositionally biased region" description="Polar residues" evidence="4">
    <location>
        <begin position="1"/>
        <end position="13"/>
    </location>
</feature>
<keyword id="KW-0131">Cell cycle</keyword>
<keyword id="KW-0132">Cell division</keyword>
<keyword id="KW-0137">Centromere</keyword>
<keyword id="KW-0158">Chromosome</keyword>
<keyword id="KW-0175">Coiled coil</keyword>
<keyword id="KW-0995">Kinetochore</keyword>
<keyword id="KW-0498">Mitosis</keyword>
<keyword id="KW-0539">Nucleus</keyword>
<keyword id="KW-1185">Reference proteome</keyword>
<evidence type="ECO:0000250" key="1"/>
<evidence type="ECO:0000250" key="2">
    <source>
        <dbReference type="UniProtKB" id="P40014"/>
    </source>
</evidence>
<evidence type="ECO:0000255" key="3"/>
<evidence type="ECO:0000256" key="4">
    <source>
        <dbReference type="SAM" id="MobiDB-lite"/>
    </source>
</evidence>
<evidence type="ECO:0000305" key="5"/>
<organism>
    <name type="scientific">Aspergillus oryzae (strain ATCC 42149 / RIB 40)</name>
    <name type="common">Yellow koji mold</name>
    <dbReference type="NCBI Taxonomy" id="510516"/>
    <lineage>
        <taxon>Eukaryota</taxon>
        <taxon>Fungi</taxon>
        <taxon>Dikarya</taxon>
        <taxon>Ascomycota</taxon>
        <taxon>Pezizomycotina</taxon>
        <taxon>Eurotiomycetes</taxon>
        <taxon>Eurotiomycetidae</taxon>
        <taxon>Eurotiales</taxon>
        <taxon>Aspergillaceae</taxon>
        <taxon>Aspergillus</taxon>
        <taxon>Aspergillus subgen. Circumdati</taxon>
    </lineage>
</organism>
<protein>
    <recommendedName>
        <fullName>Probable kinetochore protein spc25</fullName>
    </recommendedName>
</protein>